<keyword id="KW-0004">4Fe-4S</keyword>
<keyword id="KW-0028">Amino-acid biosynthesis</keyword>
<keyword id="KW-0100">Branched-chain amino acid biosynthesis</keyword>
<keyword id="KW-0408">Iron</keyword>
<keyword id="KW-0411">Iron-sulfur</keyword>
<keyword id="KW-0432">Leucine biosynthesis</keyword>
<keyword id="KW-0456">Lyase</keyword>
<keyword id="KW-0479">Metal-binding</keyword>
<name>LEUC_YERP3</name>
<evidence type="ECO:0000255" key="1">
    <source>
        <dbReference type="HAMAP-Rule" id="MF_01026"/>
    </source>
</evidence>
<protein>
    <recommendedName>
        <fullName evidence="1">3-isopropylmalate dehydratase large subunit</fullName>
        <ecNumber evidence="1">4.2.1.33</ecNumber>
    </recommendedName>
    <alternativeName>
        <fullName evidence="1">Alpha-IPM isomerase</fullName>
        <shortName evidence="1">IPMI</shortName>
    </alternativeName>
    <alternativeName>
        <fullName evidence="1">Isopropylmalate isomerase</fullName>
    </alternativeName>
</protein>
<dbReference type="EC" id="4.2.1.33" evidence="1"/>
<dbReference type="EMBL" id="CP000720">
    <property type="protein sequence ID" value="ABS48421.1"/>
    <property type="molecule type" value="Genomic_DNA"/>
</dbReference>
<dbReference type="RefSeq" id="WP_002210455.1">
    <property type="nucleotide sequence ID" value="NC_009708.1"/>
</dbReference>
<dbReference type="SMR" id="A7FM86"/>
<dbReference type="GeneID" id="57974081"/>
<dbReference type="KEGG" id="ypi:YpsIP31758_3407"/>
<dbReference type="HOGENOM" id="CLU_006714_3_4_6"/>
<dbReference type="UniPathway" id="UPA00048">
    <property type="reaction ID" value="UER00071"/>
</dbReference>
<dbReference type="Proteomes" id="UP000002412">
    <property type="component" value="Chromosome"/>
</dbReference>
<dbReference type="GO" id="GO:0003861">
    <property type="term" value="F:3-isopropylmalate dehydratase activity"/>
    <property type="evidence" value="ECO:0007669"/>
    <property type="project" value="UniProtKB-UniRule"/>
</dbReference>
<dbReference type="GO" id="GO:0051539">
    <property type="term" value="F:4 iron, 4 sulfur cluster binding"/>
    <property type="evidence" value="ECO:0007669"/>
    <property type="project" value="UniProtKB-KW"/>
</dbReference>
<dbReference type="GO" id="GO:0046872">
    <property type="term" value="F:metal ion binding"/>
    <property type="evidence" value="ECO:0007669"/>
    <property type="project" value="UniProtKB-KW"/>
</dbReference>
<dbReference type="GO" id="GO:0009098">
    <property type="term" value="P:L-leucine biosynthetic process"/>
    <property type="evidence" value="ECO:0007669"/>
    <property type="project" value="UniProtKB-UniRule"/>
</dbReference>
<dbReference type="CDD" id="cd01583">
    <property type="entry name" value="IPMI"/>
    <property type="match status" value="1"/>
</dbReference>
<dbReference type="FunFam" id="3.30.499.10:FF:000006">
    <property type="entry name" value="3-isopropylmalate dehydratase large subunit"/>
    <property type="match status" value="1"/>
</dbReference>
<dbReference type="FunFam" id="3.30.499.10:FF:000007">
    <property type="entry name" value="3-isopropylmalate dehydratase large subunit"/>
    <property type="match status" value="1"/>
</dbReference>
<dbReference type="Gene3D" id="3.30.499.10">
    <property type="entry name" value="Aconitase, domain 3"/>
    <property type="match status" value="2"/>
</dbReference>
<dbReference type="HAMAP" id="MF_01026">
    <property type="entry name" value="LeuC_type1"/>
    <property type="match status" value="1"/>
</dbReference>
<dbReference type="InterPro" id="IPR004430">
    <property type="entry name" value="3-IsopropMal_deHydase_lsu"/>
</dbReference>
<dbReference type="InterPro" id="IPR015931">
    <property type="entry name" value="Acnase/IPM_dHydase_lsu_aba_1/3"/>
</dbReference>
<dbReference type="InterPro" id="IPR001030">
    <property type="entry name" value="Acoase/IPM_deHydtase_lsu_aba"/>
</dbReference>
<dbReference type="InterPro" id="IPR018136">
    <property type="entry name" value="Aconitase_4Fe-4S_BS"/>
</dbReference>
<dbReference type="InterPro" id="IPR036008">
    <property type="entry name" value="Aconitase_4Fe-4S_dom"/>
</dbReference>
<dbReference type="InterPro" id="IPR050067">
    <property type="entry name" value="IPM_dehydratase_rel_enz"/>
</dbReference>
<dbReference type="InterPro" id="IPR033941">
    <property type="entry name" value="IPMI_cat"/>
</dbReference>
<dbReference type="NCBIfam" id="TIGR00170">
    <property type="entry name" value="leuC"/>
    <property type="match status" value="1"/>
</dbReference>
<dbReference type="NCBIfam" id="NF004016">
    <property type="entry name" value="PRK05478.1"/>
    <property type="match status" value="1"/>
</dbReference>
<dbReference type="NCBIfam" id="NF009116">
    <property type="entry name" value="PRK12466.1"/>
    <property type="match status" value="1"/>
</dbReference>
<dbReference type="PANTHER" id="PTHR43822:SF9">
    <property type="entry name" value="3-ISOPROPYLMALATE DEHYDRATASE"/>
    <property type="match status" value="1"/>
</dbReference>
<dbReference type="PANTHER" id="PTHR43822">
    <property type="entry name" value="HOMOACONITASE, MITOCHONDRIAL-RELATED"/>
    <property type="match status" value="1"/>
</dbReference>
<dbReference type="Pfam" id="PF00330">
    <property type="entry name" value="Aconitase"/>
    <property type="match status" value="1"/>
</dbReference>
<dbReference type="PRINTS" id="PR00415">
    <property type="entry name" value="ACONITASE"/>
</dbReference>
<dbReference type="SUPFAM" id="SSF53732">
    <property type="entry name" value="Aconitase iron-sulfur domain"/>
    <property type="match status" value="1"/>
</dbReference>
<dbReference type="PROSITE" id="PS00450">
    <property type="entry name" value="ACONITASE_1"/>
    <property type="match status" value="1"/>
</dbReference>
<dbReference type="PROSITE" id="PS01244">
    <property type="entry name" value="ACONITASE_2"/>
    <property type="match status" value="1"/>
</dbReference>
<accession>A7FM86</accession>
<organism>
    <name type="scientific">Yersinia pseudotuberculosis serotype O:1b (strain IP 31758)</name>
    <dbReference type="NCBI Taxonomy" id="349747"/>
    <lineage>
        <taxon>Bacteria</taxon>
        <taxon>Pseudomonadati</taxon>
        <taxon>Pseudomonadota</taxon>
        <taxon>Gammaproteobacteria</taxon>
        <taxon>Enterobacterales</taxon>
        <taxon>Yersiniaceae</taxon>
        <taxon>Yersinia</taxon>
    </lineage>
</organism>
<gene>
    <name evidence="1" type="primary">leuC</name>
    <name type="ordered locus">YpsIP31758_3407</name>
</gene>
<sequence length="476" mass="50589">MGTTSSQSKTLYQKLYDAHIVHEAPNETPLLYIDRHLVHEVTSPQAFDGLRAMGRPVRQPGKTFATMDHNVSTQTKDINASGEMARIQMQELIKNCAEFGVSLYDLNHPFQGIVHVIGPEQGMTLPGMTIVCGDSHTATHGAFGSLAFGIGTSEVEHVLATQTLKQGRAKTMRIEVNGTVGAGITAKDIVLAIIGKTGSAGGTGHVVEFCGSAIEALSMEGRMTLCNMAIEMGAKAGLVAPDDTTFAYLKGRQFAPTGEQWEQGVAYWRTLKSDADAQFDTIVTLDAADIAPQVTWGTNPGQVIAVNQIIPAPESFSDPVERASAEKALAYMDLRPGIKLTEVAIDKVFIGSCTNSRIEDLRAAAAIAQGRKVAKGVQAIVVPGSGPVKAQAEAEGLDKIFIAAGFEWRLPGCSMCLAMNNDRLEPGERCASTSNRNFEGRQGRGGRTHLVSPAMAAAAAVSGHFADVRELSATTH</sequence>
<comment type="function">
    <text evidence="1">Catalyzes the isomerization between 2-isopropylmalate and 3-isopropylmalate, via the formation of 2-isopropylmaleate.</text>
</comment>
<comment type="catalytic activity">
    <reaction evidence="1">
        <text>(2R,3S)-3-isopropylmalate = (2S)-2-isopropylmalate</text>
        <dbReference type="Rhea" id="RHEA:32287"/>
        <dbReference type="ChEBI" id="CHEBI:1178"/>
        <dbReference type="ChEBI" id="CHEBI:35121"/>
        <dbReference type="EC" id="4.2.1.33"/>
    </reaction>
</comment>
<comment type="cofactor">
    <cofactor evidence="1">
        <name>[4Fe-4S] cluster</name>
        <dbReference type="ChEBI" id="CHEBI:49883"/>
    </cofactor>
    <text evidence="1">Binds 1 [4Fe-4S] cluster per subunit.</text>
</comment>
<comment type="pathway">
    <text evidence="1">Amino-acid biosynthesis; L-leucine biosynthesis; L-leucine from 3-methyl-2-oxobutanoate: step 2/4.</text>
</comment>
<comment type="subunit">
    <text evidence="1">Heterodimer of LeuC and LeuD.</text>
</comment>
<comment type="similarity">
    <text evidence="1">Belongs to the aconitase/IPM isomerase family. LeuC type 1 subfamily.</text>
</comment>
<feature type="chain" id="PRO_1000063634" description="3-isopropylmalate dehydratase large subunit">
    <location>
        <begin position="1"/>
        <end position="476"/>
    </location>
</feature>
<feature type="binding site" evidence="1">
    <location>
        <position position="353"/>
    </location>
    <ligand>
        <name>[4Fe-4S] cluster</name>
        <dbReference type="ChEBI" id="CHEBI:49883"/>
    </ligand>
</feature>
<feature type="binding site" evidence="1">
    <location>
        <position position="413"/>
    </location>
    <ligand>
        <name>[4Fe-4S] cluster</name>
        <dbReference type="ChEBI" id="CHEBI:49883"/>
    </ligand>
</feature>
<feature type="binding site" evidence="1">
    <location>
        <position position="416"/>
    </location>
    <ligand>
        <name>[4Fe-4S] cluster</name>
        <dbReference type="ChEBI" id="CHEBI:49883"/>
    </ligand>
</feature>
<reference key="1">
    <citation type="journal article" date="2007" name="PLoS Genet.">
        <title>The complete genome sequence of Yersinia pseudotuberculosis IP31758, the causative agent of Far East scarlet-like fever.</title>
        <authorList>
            <person name="Eppinger M."/>
            <person name="Rosovitz M.J."/>
            <person name="Fricke W.F."/>
            <person name="Rasko D.A."/>
            <person name="Kokorina G."/>
            <person name="Fayolle C."/>
            <person name="Lindler L.E."/>
            <person name="Carniel E."/>
            <person name="Ravel J."/>
        </authorList>
    </citation>
    <scope>NUCLEOTIDE SEQUENCE [LARGE SCALE GENOMIC DNA]</scope>
    <source>
        <strain>IP 31758</strain>
    </source>
</reference>
<proteinExistence type="inferred from homology"/>